<feature type="chain" id="PRO_0000454361" description="Delta(7)-sterol 5(6)-desaturase ERG3A">
    <location>
        <begin position="1"/>
        <end position="349"/>
    </location>
</feature>
<feature type="transmembrane region" description="Helical" evidence="3">
    <location>
        <begin position="84"/>
        <end position="104"/>
    </location>
</feature>
<feature type="transmembrane region" description="Helical" evidence="3">
    <location>
        <begin position="124"/>
        <end position="144"/>
    </location>
</feature>
<feature type="transmembrane region" description="Helical" evidence="3">
    <location>
        <begin position="162"/>
        <end position="182"/>
    </location>
</feature>
<feature type="transmembrane region" description="Helical" evidence="3">
    <location>
        <begin position="227"/>
        <end position="247"/>
    </location>
</feature>
<feature type="domain" description="Fatty acid hydroxylase" evidence="3">
    <location>
        <begin position="170"/>
        <end position="296"/>
    </location>
</feature>
<feature type="short sequence motif" description="Histidine box-1" evidence="1">
    <location>
        <begin position="184"/>
        <end position="188"/>
    </location>
</feature>
<feature type="short sequence motif" description="Histidine box-2" evidence="1">
    <location>
        <begin position="197"/>
        <end position="201"/>
    </location>
</feature>
<feature type="short sequence motif" description="Histidine box-3" evidence="1">
    <location>
        <begin position="272"/>
        <end position="276"/>
    </location>
</feature>
<evidence type="ECO:0000250" key="1">
    <source>
        <dbReference type="UniProtKB" id="P53045"/>
    </source>
</evidence>
<evidence type="ECO:0000250" key="2">
    <source>
        <dbReference type="UniProtKB" id="Q4WIX5"/>
    </source>
</evidence>
<evidence type="ECO:0000255" key="3"/>
<evidence type="ECO:0000269" key="4">
    <source>
    </source>
</evidence>
<evidence type="ECO:0000269" key="5">
    <source>
    </source>
</evidence>
<evidence type="ECO:0000303" key="6">
    <source>
    </source>
</evidence>
<evidence type="ECO:0000305" key="7"/>
<evidence type="ECO:0000305" key="8">
    <source>
    </source>
</evidence>
<reference key="1">
    <citation type="journal article" date="2007" name="Science">
        <title>The Fusarium graminearum genome reveals a link between localized polymorphism and pathogen specialization.</title>
        <authorList>
            <person name="Cuomo C.A."/>
            <person name="Gueldener U."/>
            <person name="Xu J.-R."/>
            <person name="Trail F."/>
            <person name="Turgeon B.G."/>
            <person name="Di Pietro A."/>
            <person name="Walton J.D."/>
            <person name="Ma L.-J."/>
            <person name="Baker S.E."/>
            <person name="Rep M."/>
            <person name="Adam G."/>
            <person name="Antoniw J."/>
            <person name="Baldwin T."/>
            <person name="Calvo S.E."/>
            <person name="Chang Y.-L."/>
            <person name="DeCaprio D."/>
            <person name="Gale L.R."/>
            <person name="Gnerre S."/>
            <person name="Goswami R.S."/>
            <person name="Hammond-Kosack K."/>
            <person name="Harris L.J."/>
            <person name="Hilburn K."/>
            <person name="Kennell J.C."/>
            <person name="Kroken S."/>
            <person name="Magnuson J.K."/>
            <person name="Mannhaupt G."/>
            <person name="Mauceli E.W."/>
            <person name="Mewes H.-W."/>
            <person name="Mitterbauer R."/>
            <person name="Muehlbauer G."/>
            <person name="Muensterkoetter M."/>
            <person name="Nelson D."/>
            <person name="O'Donnell K."/>
            <person name="Ouellet T."/>
            <person name="Qi W."/>
            <person name="Quesneville H."/>
            <person name="Roncero M.I.G."/>
            <person name="Seong K.-Y."/>
            <person name="Tetko I.V."/>
            <person name="Urban M."/>
            <person name="Waalwijk C."/>
            <person name="Ward T.J."/>
            <person name="Yao J."/>
            <person name="Birren B.W."/>
            <person name="Kistler H.C."/>
        </authorList>
    </citation>
    <scope>NUCLEOTIDE SEQUENCE [LARGE SCALE GENOMIC DNA]</scope>
    <source>
        <strain>ATCC MYA-4620 / CBS 123657 / FGSC 9075 / NRRL 31084 / PH-1</strain>
    </source>
</reference>
<reference key="2">
    <citation type="journal article" date="2010" name="Nature">
        <title>Comparative genomics reveals mobile pathogenicity chromosomes in Fusarium.</title>
        <authorList>
            <person name="Ma L.-J."/>
            <person name="van der Does H.C."/>
            <person name="Borkovich K.A."/>
            <person name="Coleman J.J."/>
            <person name="Daboussi M.-J."/>
            <person name="Di Pietro A."/>
            <person name="Dufresne M."/>
            <person name="Freitag M."/>
            <person name="Grabherr M."/>
            <person name="Henrissat B."/>
            <person name="Houterman P.M."/>
            <person name="Kang S."/>
            <person name="Shim W.-B."/>
            <person name="Woloshuk C."/>
            <person name="Xie X."/>
            <person name="Xu J.-R."/>
            <person name="Antoniw J."/>
            <person name="Baker S.E."/>
            <person name="Bluhm B.H."/>
            <person name="Breakspear A."/>
            <person name="Brown D.W."/>
            <person name="Butchko R.A.E."/>
            <person name="Chapman S."/>
            <person name="Coulson R."/>
            <person name="Coutinho P.M."/>
            <person name="Danchin E.G.J."/>
            <person name="Diener A."/>
            <person name="Gale L.R."/>
            <person name="Gardiner D.M."/>
            <person name="Goff S."/>
            <person name="Hammond-Kosack K.E."/>
            <person name="Hilburn K."/>
            <person name="Hua-Van A."/>
            <person name="Jonkers W."/>
            <person name="Kazan K."/>
            <person name="Kodira C.D."/>
            <person name="Koehrsen M."/>
            <person name="Kumar L."/>
            <person name="Lee Y.-H."/>
            <person name="Li L."/>
            <person name="Manners J.M."/>
            <person name="Miranda-Saavedra D."/>
            <person name="Mukherjee M."/>
            <person name="Park G."/>
            <person name="Park J."/>
            <person name="Park S.-Y."/>
            <person name="Proctor R.H."/>
            <person name="Regev A."/>
            <person name="Ruiz-Roldan M.C."/>
            <person name="Sain D."/>
            <person name="Sakthikumar S."/>
            <person name="Sykes S."/>
            <person name="Schwartz D.C."/>
            <person name="Turgeon B.G."/>
            <person name="Wapinski I."/>
            <person name="Yoder O."/>
            <person name="Young S."/>
            <person name="Zeng Q."/>
            <person name="Zhou S."/>
            <person name="Galagan J."/>
            <person name="Cuomo C.A."/>
            <person name="Kistler H.C."/>
            <person name="Rep M."/>
        </authorList>
    </citation>
    <scope>GENOME REANNOTATION</scope>
    <source>
        <strain>ATCC MYA-4620 / CBS 123657 / FGSC 9075 / NRRL 31084 / PH-1</strain>
    </source>
</reference>
<reference key="3">
    <citation type="journal article" date="2015" name="BMC Genomics">
        <title>The completed genome sequence of the pathogenic ascomycete fungus Fusarium graminearum.</title>
        <authorList>
            <person name="King R."/>
            <person name="Urban M."/>
            <person name="Hammond-Kosack M.C.U."/>
            <person name="Hassani-Pak K."/>
            <person name="Hammond-Kosack K.E."/>
        </authorList>
    </citation>
    <scope>NUCLEOTIDE SEQUENCE [LARGE SCALE GENOMIC DNA]</scope>
    <source>
        <strain>ATCC MYA-4620 / CBS 123657 / FGSC 9075 / NRRL 31084 / PH-1</strain>
    </source>
</reference>
<reference key="4">
    <citation type="journal article" date="2013" name="New Phytol.">
        <title>Characterization of the sterol 14alpha-demethylases of Fusarium graminearum identifies a novel genus-specific CYP51 function.</title>
        <authorList>
            <person name="Fan J."/>
            <person name="Urban M."/>
            <person name="Parker J.E."/>
            <person name="Brewer H.C."/>
            <person name="Kelly S.L."/>
            <person name="Hammond-Kosack K.E."/>
            <person name="Fraaije B.A."/>
            <person name="Liu X."/>
            <person name="Cools H.J."/>
        </authorList>
    </citation>
    <scope>FUNCTION</scope>
    <scope>DISRUPTION PHENOTYPE</scope>
    <scope>PATHWAY</scope>
</reference>
<reference key="5">
    <citation type="journal article" date="2014" name="Fungal Genet. Biol.">
        <title>Functional characterization of FgERG3 and FgERG5 associated with ergosterol biosynthesis, vegetative differentiation and virulence of Fusarium graminearum.</title>
        <authorList>
            <person name="Yun Y."/>
            <person name="Yin D."/>
            <person name="Dawood D.H."/>
            <person name="Liu X."/>
            <person name="Chen Y."/>
            <person name="Ma Z."/>
        </authorList>
    </citation>
    <scope>FUNCTION</scope>
    <scope>DISRUPTION PHENOTYPE</scope>
</reference>
<comment type="function">
    <text evidence="2 5 8">C-5 sterol desaturase; part of the third module of ergosterol biosynthesis pathway that includes the late steps of the pathway (PubMed:24785759). ERG3A and ERG3BB catalyze the introduction of a C-5 double bond in the B ring to produce 5-dehydroepisterol (By similarity). The third module or late pathway involves the ergosterol synthesis itself through consecutive reactions that mainly occur in the endoplasmic reticulum (ER) membrane. Firstly, the squalene synthase ERG9 catalyzes the condensation of 2 farnesyl pyrophosphate moieties to form squalene, which is the precursor of all steroids. Squalene synthase is crucial for balancing the incorporation of farnesyl diphosphate (FPP) into sterol and nonsterol isoprene synthesis. Secondly, squalene is converted into lanosterol by the consecutive action of the squalene epoxidase ERG1 and the lanosterol synthase ERG7. Then, the delta(24)-sterol C-methyltransferase ERG6 methylates lanosterol at C-24 to produce eburicol. Eburicol is the substrate of the sterol 14-alpha demethylase encoded by CYP51A, CYP51B and CYP51C, to yield 4,4,24-trimethyl ergosta-8,14,24(28)-trienol. CYP51B encodes the enzyme primarily responsible for sterol 14-alpha-demethylation, and plays an essential role in ascospore formation. CYP51A encodes an additional sterol 14-alpha-demethylase, induced on ergosterol depletion and responsible for the intrinsic variation in azole sensitivity. The third CYP51 isoform, CYP51C, does not encode a sterol 14-alpha-demethylase, but is required for full virulence on host wheat ears. The C-14 reductase ERG24 then reduces the C14=C15 double bond which leads to 4,4-dimethylfecosterol. A sequence of further demethylations at C-4, involving the C-4 demethylation complex containing the C-4 methylsterol oxidases ERG25, the sterol-4-alpha-carboxylate 3-dehydrogenase ERG26 and the 3-keto-steroid reductase ERG27, leads to the production of fecosterol via 4-methylfecosterol. ERG28 has a role as a scaffold to help anchor ERG25, ERG26 and ERG27 to the endoplasmic reticulum. The C-8 sterol isomerase ERG2 then catalyzes the reaction which results in unsaturation at C-7 in the B ring of sterols and thus converts fecosterol to episterol. The sterol-C5-desaturases ERG3A and ERG3BB then catalyze the introduction of a C-5 double bond in the B ring to produce 5-dehydroepisterol. The C-22 sterol desaturases ERG5A and ERG5B further convert 5-dehydroepisterol into ergosta-5,7,22,24(28)-tetraen-3beta-ol by forming the C-22(23) double bond in the sterol side chain. Finally, ergosta-5,7,22,24(28)-tetraen-3beta-ol is substrate of the C-24(28) sterol reductase ERG4 to produce ergosterol (Probable).</text>
</comment>
<comment type="catalytic activity">
    <reaction evidence="8">
        <text>episterol + 2 Fe(II)-[cytochrome b5] + O2 + 2 H(+) = 5-dehydroepisterol + 2 Fe(III)-[cytochrome b5] + 2 H2O</text>
        <dbReference type="Rhea" id="RHEA:46560"/>
        <dbReference type="Rhea" id="RHEA-COMP:10438"/>
        <dbReference type="Rhea" id="RHEA-COMP:10439"/>
        <dbReference type="ChEBI" id="CHEBI:15377"/>
        <dbReference type="ChEBI" id="CHEBI:15378"/>
        <dbReference type="ChEBI" id="CHEBI:15379"/>
        <dbReference type="ChEBI" id="CHEBI:23929"/>
        <dbReference type="ChEBI" id="CHEBI:29033"/>
        <dbReference type="ChEBI" id="CHEBI:29034"/>
        <dbReference type="ChEBI" id="CHEBI:52972"/>
        <dbReference type="EC" id="1.14.19.20"/>
    </reaction>
    <physiologicalReaction direction="left-to-right" evidence="8">
        <dbReference type="Rhea" id="RHEA:46561"/>
    </physiologicalReaction>
</comment>
<comment type="pathway">
    <text evidence="8">Steroid metabolism; ergosterol biosynthesis.</text>
</comment>
<comment type="subcellular location">
    <subcellularLocation>
        <location evidence="7">Endoplasmic reticulum membrane</location>
        <topology evidence="3">Multi-pass membrane protein</topology>
    </subcellularLocation>
</comment>
<comment type="domain">
    <text evidence="1">The histidine box domains may contain the active site and/or be involved in metal ion binding.</text>
</comment>
<comment type="disruption phenotype">
    <text evidence="4 5">Leads to a severe decrease in ergosterol production and virulence when ERG3B is also deleted (PubMed:23442154). Results in increased production of deoxynivalenol (DON) (PubMed:24785759).</text>
</comment>
<comment type="miscellaneous">
    <text evidence="4">In Fusarium, the biosynthesis pathway of the sterol precursors leading to the prevalent sterol ergosterol differs from yeast. The ringsystem of lanosterol in S.cerevisiae is firstly demethylised in three enzymatic steps leading to the intermediate zymosterol and secondly a methyl group is added to zymosterol by the sterol 24-C-methyltransferase to form fecosterol. In Fusarium, lanosterol is firstly transmethylated by the sterol 24-C-methyltransferase leading to the intermediate eburicol and secondly demethylated in three steps to form fecosterol.</text>
</comment>
<comment type="similarity">
    <text evidence="7">Belongs to the sterol desaturase family.</text>
</comment>
<accession>I1RFM2</accession>
<keyword id="KW-0256">Endoplasmic reticulum</keyword>
<keyword id="KW-0444">Lipid biosynthesis</keyword>
<keyword id="KW-0443">Lipid metabolism</keyword>
<keyword id="KW-0472">Membrane</keyword>
<keyword id="KW-0560">Oxidoreductase</keyword>
<keyword id="KW-1185">Reference proteome</keyword>
<keyword id="KW-0752">Steroid biosynthesis</keyword>
<keyword id="KW-0753">Steroid metabolism</keyword>
<keyword id="KW-0756">Sterol biosynthesis</keyword>
<keyword id="KW-1207">Sterol metabolism</keyword>
<keyword id="KW-0812">Transmembrane</keyword>
<keyword id="KW-1133">Transmembrane helix</keyword>
<organism>
    <name type="scientific">Gibberella zeae (strain ATCC MYA-4620 / CBS 123657 / FGSC 9075 / NRRL 31084 / PH-1)</name>
    <name type="common">Wheat head blight fungus</name>
    <name type="synonym">Fusarium graminearum</name>
    <dbReference type="NCBI Taxonomy" id="229533"/>
    <lineage>
        <taxon>Eukaryota</taxon>
        <taxon>Fungi</taxon>
        <taxon>Dikarya</taxon>
        <taxon>Ascomycota</taxon>
        <taxon>Pezizomycotina</taxon>
        <taxon>Sordariomycetes</taxon>
        <taxon>Hypocreomycetidae</taxon>
        <taxon>Hypocreales</taxon>
        <taxon>Nectriaceae</taxon>
        <taxon>Fusarium</taxon>
    </lineage>
</organism>
<proteinExistence type="inferred from homology"/>
<protein>
    <recommendedName>
        <fullName evidence="7">Delta(7)-sterol 5(6)-desaturase ERG3A</fullName>
        <ecNumber evidence="8">1.14.19.20</ecNumber>
    </recommendedName>
    <alternativeName>
        <fullName evidence="6">C-5 sterol desaturase ERG3A</fullName>
    </alternativeName>
    <alternativeName>
        <fullName evidence="6">Ergosterol Delta(5,6) desaturase ERG3A</fullName>
    </alternativeName>
    <alternativeName>
        <fullName evidence="6">Ergosterol biosynthetic protein 3A</fullName>
    </alternativeName>
</protein>
<sequence>MDVVLEVVDTFIADYAYAYFYPKRLAPYDFPSPSNTTDTSAKAFSTWIYKPATQFITLEPPEQAYMSSWDRDNPLRQALTLYLITWIFGLLVYFIVATLSYIFIFDKRTFEHPRFIKNQVRMEIIAANKAMPVMAIITAPFFLLEVQGYGKLYDTTEDGPGLWYDFFQFPLFLLFTDFCIYWAHRWLHHRLVYKYLHKLHHKWIMPTPFASHAFHPLDGFTQSLPYHIFPFIFPLQKMAYVALFVFVNLWSVMIHDGEYLTNNPVVNGAACHSLHHSRFEVNYGQFFTAFDRMGGTYRMPEQWMFERDMKMSEGRWKKEIEKVDELIEEIEGSDNRTYTDSAPIMKKTQ</sequence>
<gene>
    <name evidence="6" type="primary">ERG3A</name>
    <name type="ORF">FG02502</name>
    <name type="ORF">FGRAMPH1_01T06005</name>
</gene>
<dbReference type="EC" id="1.14.19.20" evidence="8"/>
<dbReference type="EMBL" id="HG970332">
    <property type="protein sequence ID" value="CEF74807.1"/>
    <property type="molecule type" value="Genomic_DNA"/>
</dbReference>
<dbReference type="RefSeq" id="XP_011318434.1">
    <property type="nucleotide sequence ID" value="XM_011320132.1"/>
</dbReference>
<dbReference type="FunCoup" id="I1RFM2">
    <property type="interactions" value="192"/>
</dbReference>
<dbReference type="STRING" id="229533.I1RFM2"/>
<dbReference type="KEGG" id="fgr:FGSG_02502"/>
<dbReference type="VEuPathDB" id="FungiDB:FGRAMPH1_01G06005"/>
<dbReference type="eggNOG" id="KOG0872">
    <property type="taxonomic scope" value="Eukaryota"/>
</dbReference>
<dbReference type="HOGENOM" id="CLU_047036_3_0_1"/>
<dbReference type="InParanoid" id="I1RFM2"/>
<dbReference type="OrthoDB" id="2415at110618"/>
<dbReference type="UniPathway" id="UPA00768"/>
<dbReference type="PHI-base" id="PHI:3035"/>
<dbReference type="Proteomes" id="UP000070720">
    <property type="component" value="Chromosome 1"/>
</dbReference>
<dbReference type="GO" id="GO:0005789">
    <property type="term" value="C:endoplasmic reticulum membrane"/>
    <property type="evidence" value="ECO:0007669"/>
    <property type="project" value="UniProtKB-SubCell"/>
</dbReference>
<dbReference type="GO" id="GO:0005506">
    <property type="term" value="F:iron ion binding"/>
    <property type="evidence" value="ECO:0007669"/>
    <property type="project" value="InterPro"/>
</dbReference>
<dbReference type="GO" id="GO:0016491">
    <property type="term" value="F:oxidoreductase activity"/>
    <property type="evidence" value="ECO:0007669"/>
    <property type="project" value="UniProtKB-KW"/>
</dbReference>
<dbReference type="GO" id="GO:0016126">
    <property type="term" value="P:sterol biosynthetic process"/>
    <property type="evidence" value="ECO:0007669"/>
    <property type="project" value="UniProtKB-UniPathway"/>
</dbReference>
<dbReference type="InterPro" id="IPR006694">
    <property type="entry name" value="Fatty_acid_hydroxylase"/>
</dbReference>
<dbReference type="InterPro" id="IPR050307">
    <property type="entry name" value="Sterol_Desaturase_Related"/>
</dbReference>
<dbReference type="PANTHER" id="PTHR11863">
    <property type="entry name" value="STEROL DESATURASE"/>
    <property type="match status" value="1"/>
</dbReference>
<dbReference type="Pfam" id="PF04116">
    <property type="entry name" value="FA_hydroxylase"/>
    <property type="match status" value="1"/>
</dbReference>
<name>ERG3A_GIBZE</name>